<dbReference type="EMBL" id="CP001091">
    <property type="protein sequence ID" value="ACE62325.1"/>
    <property type="molecule type" value="Genomic_DNA"/>
</dbReference>
<dbReference type="RefSeq" id="WP_005598991.1">
    <property type="nucleotide sequence ID" value="NC_010939.1"/>
</dbReference>
<dbReference type="SMR" id="B3H2K8"/>
<dbReference type="GeneID" id="48599897"/>
<dbReference type="KEGG" id="apa:APP7_1673"/>
<dbReference type="HOGENOM" id="CLU_056339_6_0_6"/>
<dbReference type="Proteomes" id="UP000001226">
    <property type="component" value="Chromosome"/>
</dbReference>
<dbReference type="GO" id="GO:0005737">
    <property type="term" value="C:cytoplasm"/>
    <property type="evidence" value="ECO:0007669"/>
    <property type="project" value="UniProtKB-SubCell"/>
</dbReference>
<dbReference type="GO" id="GO:0016151">
    <property type="term" value="F:nickel cation binding"/>
    <property type="evidence" value="ECO:0007669"/>
    <property type="project" value="UniProtKB-UniRule"/>
</dbReference>
<dbReference type="HAMAP" id="MF_01384">
    <property type="entry name" value="UreD"/>
    <property type="match status" value="1"/>
</dbReference>
<dbReference type="InterPro" id="IPR002669">
    <property type="entry name" value="UreD"/>
</dbReference>
<dbReference type="PANTHER" id="PTHR33643">
    <property type="entry name" value="UREASE ACCESSORY PROTEIN D"/>
    <property type="match status" value="1"/>
</dbReference>
<dbReference type="PANTHER" id="PTHR33643:SF1">
    <property type="entry name" value="UREASE ACCESSORY PROTEIN D"/>
    <property type="match status" value="1"/>
</dbReference>
<dbReference type="Pfam" id="PF01774">
    <property type="entry name" value="UreD"/>
    <property type="match status" value="1"/>
</dbReference>
<evidence type="ECO:0000255" key="1">
    <source>
        <dbReference type="HAMAP-Rule" id="MF_01384"/>
    </source>
</evidence>
<comment type="function">
    <text evidence="1">Required for maturation of urease via the functional incorporation of the urease nickel metallocenter.</text>
</comment>
<comment type="subunit">
    <text evidence="1">UreD, UreF and UreG form a complex that acts as a GTP-hydrolysis-dependent molecular chaperone, activating the urease apoprotein by helping to assemble the nickel containing metallocenter of UreC. The UreE protein probably delivers the nickel.</text>
</comment>
<comment type="subcellular location">
    <subcellularLocation>
        <location evidence="1">Cytoplasm</location>
    </subcellularLocation>
</comment>
<comment type="similarity">
    <text evidence="1">Belongs to the UreD family.</text>
</comment>
<gene>
    <name evidence="1" type="primary">ureD</name>
    <name type="ordered locus">APP7_1673</name>
</gene>
<protein>
    <recommendedName>
        <fullName evidence="1">Urease accessory protein UreD</fullName>
    </recommendedName>
</protein>
<keyword id="KW-0143">Chaperone</keyword>
<keyword id="KW-0963">Cytoplasm</keyword>
<keyword id="KW-0996">Nickel insertion</keyword>
<sequence>MQSKLLLSTKLTSQGKTQLDQYFVSPPFKVMTLPAYDDAWQNGLNAMQMSSSPGLLASDLLDIEISLADDTALSLNTQAFTRVQSMNEGDYATQKTCIKLGKNSRLFYLPHPLVLHKDSSFKQTTEIEMSEQSELIYGEIVAIGRVLNGERFAFRHFASYLRISYQNRPIIADRIQWLPAKMALTSLSQMEDFSHQGSLTYVNLAKNAVEIKAMVSELQALAAEQKNMLIGVSQLNEGGLMVRVLAHRADIIQHLFERIGQVLKAQSNIV</sequence>
<name>URED_ACTP7</name>
<accession>B3H2K8</accession>
<proteinExistence type="inferred from homology"/>
<organism>
    <name type="scientific">Actinobacillus pleuropneumoniae serotype 7 (strain AP76)</name>
    <dbReference type="NCBI Taxonomy" id="537457"/>
    <lineage>
        <taxon>Bacteria</taxon>
        <taxon>Pseudomonadati</taxon>
        <taxon>Pseudomonadota</taxon>
        <taxon>Gammaproteobacteria</taxon>
        <taxon>Pasteurellales</taxon>
        <taxon>Pasteurellaceae</taxon>
        <taxon>Actinobacillus</taxon>
    </lineage>
</organism>
<reference key="1">
    <citation type="submission" date="2008-06" db="EMBL/GenBank/DDBJ databases">
        <title>Genome and proteome analysis of A. pleuropneumoniae serotype 7.</title>
        <authorList>
            <person name="Linke B."/>
            <person name="Buettner F."/>
            <person name="Martinez-Arias R."/>
            <person name="Goesmann A."/>
            <person name="Baltes N."/>
            <person name="Tegetmeyer H."/>
            <person name="Singh M."/>
            <person name="Gerlach G.F."/>
        </authorList>
    </citation>
    <scope>NUCLEOTIDE SEQUENCE [LARGE SCALE GENOMIC DNA]</scope>
    <source>
        <strain>AP76</strain>
    </source>
</reference>
<feature type="chain" id="PRO_1000145087" description="Urease accessory protein UreD">
    <location>
        <begin position="1"/>
        <end position="270"/>
    </location>
</feature>